<feature type="initiator methionine" description="Removed; by host" evidence="2">
    <location>
        <position position="1"/>
    </location>
</feature>
<feature type="chain" id="PRO_0000361036" description="RING finger protein Z" evidence="2">
    <location>
        <begin position="2"/>
        <end position="99"/>
    </location>
</feature>
<feature type="zinc finger region" description="RING-type; atypical" evidence="2">
    <location>
        <begin position="34"/>
        <end position="70"/>
    </location>
</feature>
<feature type="region of interest" description="Disordered" evidence="3">
    <location>
        <begin position="1"/>
        <end position="27"/>
    </location>
</feature>
<feature type="region of interest" description="Disordered" evidence="3">
    <location>
        <begin position="79"/>
        <end position="99"/>
    </location>
</feature>
<feature type="short sequence motif" description="PTAP/PSAP motif" evidence="2">
    <location>
        <begin position="84"/>
        <end position="87"/>
    </location>
</feature>
<feature type="short sequence motif" description="PPXY motif" evidence="2">
    <location>
        <begin position="94"/>
        <end position="97"/>
    </location>
</feature>
<feature type="compositionally biased region" description="Polar residues" evidence="3">
    <location>
        <begin position="14"/>
        <end position="24"/>
    </location>
</feature>
<feature type="compositionally biased region" description="Pro residues" evidence="3">
    <location>
        <begin position="85"/>
        <end position="99"/>
    </location>
</feature>
<feature type="lipid moiety-binding region" description="N-myristoyl glycine; by host" evidence="2">
    <location>
        <position position="2"/>
    </location>
</feature>
<organism>
    <name type="scientific">Mobala mammarenavirus (isolate Rat/Central African Republic/Acar 3080/1983)</name>
    <name type="common">MOBV</name>
    <dbReference type="NCBI Taxonomy" id="3052325"/>
    <lineage>
        <taxon>Viruses</taxon>
        <taxon>Riboviria</taxon>
        <taxon>Orthornavirae</taxon>
        <taxon>Negarnaviricota</taxon>
        <taxon>Polyploviricotina</taxon>
        <taxon>Ellioviricetes</taxon>
        <taxon>Bunyavirales</taxon>
        <taxon>Arenaviridae</taxon>
        <taxon>Mammarenavirus</taxon>
    </lineage>
</organism>
<proteinExistence type="inferred from homology"/>
<name>Z_MOBVC</name>
<organismHost>
    <name type="scientific">Praomys</name>
    <name type="common">African soft-furred rats</name>
    <dbReference type="NCBI Taxonomy" id="10111"/>
</organismHost>
<protein>
    <recommendedName>
        <fullName evidence="2">RING finger protein Z</fullName>
        <shortName evidence="2">Protein Z</shortName>
    </recommendedName>
    <alternativeName>
        <fullName evidence="2">Zinc-binding protein</fullName>
    </alternativeName>
</protein>
<dbReference type="EMBL" id="DQ328876">
    <property type="protein sequence ID" value="ABC71138.1"/>
    <property type="molecule type" value="Genomic_RNA"/>
</dbReference>
<dbReference type="RefSeq" id="YP_516228.1">
    <property type="nucleotide sequence ID" value="NC_007904.1"/>
</dbReference>
<dbReference type="SMR" id="Q27YE6"/>
<dbReference type="GeneID" id="3953122"/>
<dbReference type="KEGG" id="vg:3953122"/>
<dbReference type="OrthoDB" id="23344at10239"/>
<dbReference type="Proteomes" id="UP000140987">
    <property type="component" value="Genome"/>
</dbReference>
<dbReference type="GO" id="GO:0044220">
    <property type="term" value="C:host cell perinuclear region of cytoplasm"/>
    <property type="evidence" value="ECO:0007669"/>
    <property type="project" value="UniProtKB-SubCell"/>
</dbReference>
<dbReference type="GO" id="GO:0020002">
    <property type="term" value="C:host cell plasma membrane"/>
    <property type="evidence" value="ECO:0007669"/>
    <property type="project" value="UniProtKB-SubCell"/>
</dbReference>
<dbReference type="GO" id="GO:0016020">
    <property type="term" value="C:membrane"/>
    <property type="evidence" value="ECO:0007669"/>
    <property type="project" value="UniProtKB-UniRule"/>
</dbReference>
<dbReference type="GO" id="GO:0044423">
    <property type="term" value="C:virion component"/>
    <property type="evidence" value="ECO:0007669"/>
    <property type="project" value="UniProtKB-UniRule"/>
</dbReference>
<dbReference type="GO" id="GO:0003723">
    <property type="term" value="F:RNA binding"/>
    <property type="evidence" value="ECO:0007669"/>
    <property type="project" value="UniProtKB-UniRule"/>
</dbReference>
<dbReference type="GO" id="GO:0008270">
    <property type="term" value="F:zinc ion binding"/>
    <property type="evidence" value="ECO:0007669"/>
    <property type="project" value="UniProtKB-UniRule"/>
</dbReference>
<dbReference type="GO" id="GO:0046761">
    <property type="term" value="P:viral budding from plasma membrane"/>
    <property type="evidence" value="ECO:0007669"/>
    <property type="project" value="UniProtKB-UniRule"/>
</dbReference>
<dbReference type="GO" id="GO:0039702">
    <property type="term" value="P:viral budding via host ESCRT complex"/>
    <property type="evidence" value="ECO:0007669"/>
    <property type="project" value="UniProtKB-UniRule"/>
</dbReference>
<dbReference type="Gene3D" id="3.30.160.310">
    <property type="match status" value="1"/>
</dbReference>
<dbReference type="HAMAP" id="MF_04087">
    <property type="entry name" value="ARENA_Z"/>
    <property type="match status" value="1"/>
</dbReference>
<dbReference type="InterPro" id="IPR024183">
    <property type="entry name" value="RING_finger_Z_arenaviridae"/>
</dbReference>
<dbReference type="InterPro" id="IPR038485">
    <property type="entry name" value="Z_RING-type_Znf_sf"/>
</dbReference>
<dbReference type="InterPro" id="IPR003224">
    <property type="entry name" value="Z_RING_Znf"/>
</dbReference>
<dbReference type="Pfam" id="PF03854">
    <property type="entry name" value="zf-P11"/>
    <property type="match status" value="1"/>
</dbReference>
<dbReference type="PIRSF" id="PIRSF004030">
    <property type="entry name" value="Z_ArenaV"/>
    <property type="match status" value="1"/>
</dbReference>
<dbReference type="SUPFAM" id="SSF57850">
    <property type="entry name" value="RING/U-box"/>
    <property type="match status" value="1"/>
</dbReference>
<evidence type="ECO:0000250" key="1">
    <source>
        <dbReference type="UniProtKB" id="P18541"/>
    </source>
</evidence>
<evidence type="ECO:0000255" key="2">
    <source>
        <dbReference type="HAMAP-Rule" id="MF_04087"/>
    </source>
</evidence>
<evidence type="ECO:0000256" key="3">
    <source>
        <dbReference type="SAM" id="MobiDB-lite"/>
    </source>
</evidence>
<accession>Q27YE6</accession>
<sequence>MGQKPSKPKAPPTTYESPRSSLTPDATGFGPEFCKSCWFERKGLIKCQNHYLCMTCLTLLLTVSNRCPVCKYPLPTKLRLEKSPTAPPPEATNPPPYSP</sequence>
<reference key="1">
    <citation type="journal article" date="2006" name="Virology">
        <title>Phylogeny and evolution of old world arenaviruses.</title>
        <authorList>
            <person name="Emonet S."/>
            <person name="Lemasson J.J."/>
            <person name="Gonzalez J.P."/>
            <person name="de Lamballerie X."/>
            <person name="Charrel R.N."/>
        </authorList>
    </citation>
    <scope>NUCLEOTIDE SEQUENCE [GENOMIC RNA]</scope>
</reference>
<reference key="2">
    <citation type="journal article" date="2008" name="Curr. Opin. Microbiol.">
        <title>Phylogeny of the genus Arenavirus.</title>
        <authorList>
            <person name="Charrel R.N."/>
            <person name="de Lamballerie X."/>
            <person name="Emonet S."/>
        </authorList>
    </citation>
    <scope>NUCLEOTIDE SEQUENCE [GENOMIC RNA]</scope>
</reference>
<gene>
    <name evidence="2" type="primary">Z</name>
</gene>
<comment type="function">
    <text evidence="1 2">Plays a crucial role in virion assembly and budding. Expressed late in the virus life cycle, it acts as an inhibitor of viral transcription and RNA synthesis by interacting with the viral polymerase L. Presumably recruits the NP encapsidated genome to cellular membranes at budding sites via direct interaction with NP. Plays critical roles in the final steps of viral release by interacting with host TSG101, a member of the vacuolar protein-sorting pathway and using other cellular host proteins involved in vesicle formation pathway. The budding of the virus progeny occurs after association of protein Z with the viral glycoprotein complex SSP-GP1-GP2 at the cell periphery, step that requires myristoylation of protein Z. Also selectively represses protein production by associating with host eIF4E (By similarity). In cell-based minigenome assay, has an inhibitory effect on the ribonucleoprotein machinery (vRNP), which is responsible for the replication and transcription of the viral genome (By similarity).</text>
</comment>
<comment type="subunit">
    <text evidence="2">Interacts with protein NP; this interaction probably directs the encapsidated genome to budding sites. Interacts (via RING domain) with polymerase L; this interaction inhibits viral transcription and replication, Z partially blocks the product exit tunnel for the releasing nascent RNA product. Interacts with the glycoprotein complex; this interaction plays a role in virion budding. Interacts with host eIF4E; this interaction results in eIF4E reduced affinity for its substrate, the 5'-m7 G cap structure. Interacts (via late-budding domain) with host TSG101; this interaction is essential for budding and release of viral particles. Interacts with host RPLP0; this interaction may serve to load ribosome-like particles inside the virion. Interacts with host PML; this interaction induces PML bodies redistribution in the cytoplasm upon viral infection.</text>
</comment>
<comment type="subcellular location">
    <subcellularLocation>
        <location evidence="2">Virion</location>
    </subcellularLocation>
    <subcellularLocation>
        <location evidence="2">Host cytoplasm</location>
        <location evidence="2">Host perinuclear region</location>
    </subcellularLocation>
    <subcellularLocation>
        <location evidence="2">Host cell membrane</location>
        <topology evidence="2">Lipid-anchor</topology>
        <orientation evidence="2">Cytoplasmic side</orientation>
    </subcellularLocation>
    <text evidence="2">Mainly perinuclear. During budding, associates at the inner side of the plasma membrane of infected cells.</text>
</comment>
<comment type="domain">
    <text evidence="2">Late-budding domains (L domains) are short sequence motifs essential for viral particle budding. They recruit proteins of the host ESCRT machinery (Endosomal Sorting Complex Required for Transport) or ESCRT-associated proteins.</text>
</comment>
<comment type="PTM">
    <text evidence="1">Myristoylation is required for the role of RING finger protein Z in assembly and budding.</text>
</comment>
<comment type="similarity">
    <text>Belongs to the arenaviridae Z protein family.</text>
</comment>
<keyword id="KW-1032">Host cell membrane</keyword>
<keyword id="KW-1035">Host cytoplasm</keyword>
<keyword id="KW-1043">Host membrane</keyword>
<keyword id="KW-0945">Host-virus interaction</keyword>
<keyword id="KW-0449">Lipoprotein</keyword>
<keyword id="KW-0472">Membrane</keyword>
<keyword id="KW-0479">Metal-binding</keyword>
<keyword id="KW-0519">Myristate</keyword>
<keyword id="KW-1198">Viral budding</keyword>
<keyword id="KW-1187">Viral budding via the host ESCRT complexes</keyword>
<keyword id="KW-1188">Viral release from host cell</keyword>
<keyword id="KW-0946">Virion</keyword>
<keyword id="KW-0862">Zinc</keyword>
<keyword id="KW-0863">Zinc-finger</keyword>